<sequence>MNSKIFAVLLLLGLLSCVLSDQYCPKSSITACKKMNIRNDCCKDDDCTGGSWCCATPCGNFCKYPTDRPGGKRAAGGKSCKTGYVYY</sequence>
<protein>
    <recommendedName>
        <fullName>U15-lycotoxin-Ls1f</fullName>
    </recommendedName>
    <alternativeName>
        <fullName>Toxin-like structure LSTX-N15</fullName>
    </alternativeName>
</protein>
<accession>B6DD48</accession>
<reference key="1">
    <citation type="journal article" date="2010" name="Zoology">
        <title>Transcriptome analysis of the venom glands of the Chinese wolf spider Lycosa singoriensis.</title>
        <authorList>
            <person name="Zhang Y."/>
            <person name="Chen J."/>
            <person name="Tang X."/>
            <person name="Wang F."/>
            <person name="Jiang L."/>
            <person name="Xiong X."/>
            <person name="Wang M."/>
            <person name="Rong M."/>
            <person name="Liu Z."/>
            <person name="Liang S."/>
        </authorList>
    </citation>
    <scope>NUCLEOTIDE SEQUENCE [LARGE SCALE MRNA]</scope>
    <source>
        <tissue>Venom gland</tissue>
    </source>
</reference>
<dbReference type="EMBL" id="EU926132">
    <property type="protein sequence ID" value="ACI41464.1"/>
    <property type="molecule type" value="mRNA"/>
</dbReference>
<dbReference type="EMBL" id="FM864136">
    <property type="protein sequence ID" value="CAS03733.1"/>
    <property type="molecule type" value="mRNA"/>
</dbReference>
<dbReference type="SMR" id="B6DD48"/>
<dbReference type="ArachnoServer" id="AS001071">
    <property type="toxin name" value="U15-lycotoxin-Ls1f"/>
</dbReference>
<dbReference type="GO" id="GO:0005576">
    <property type="term" value="C:extracellular region"/>
    <property type="evidence" value="ECO:0007669"/>
    <property type="project" value="UniProtKB-SubCell"/>
</dbReference>
<dbReference type="GO" id="GO:0090729">
    <property type="term" value="F:toxin activity"/>
    <property type="evidence" value="ECO:0007669"/>
    <property type="project" value="UniProtKB-KW"/>
</dbReference>
<dbReference type="GO" id="GO:0042742">
    <property type="term" value="P:defense response to bacterium"/>
    <property type="evidence" value="ECO:0007669"/>
    <property type="project" value="UniProtKB-KW"/>
</dbReference>
<dbReference type="InterPro" id="IPR036645">
    <property type="entry name" value="Elafin-like_sf"/>
</dbReference>
<dbReference type="SUPFAM" id="SSF57256">
    <property type="entry name" value="Elafin-like"/>
    <property type="match status" value="1"/>
</dbReference>
<evidence type="ECO:0000250" key="1"/>
<evidence type="ECO:0000255" key="2"/>
<evidence type="ECO:0000305" key="3"/>
<feature type="signal peptide" evidence="2">
    <location>
        <begin position="1"/>
        <end position="20"/>
    </location>
</feature>
<feature type="chain" id="PRO_0000401891" description="U15-lycotoxin-Ls1f">
    <location>
        <begin position="21"/>
        <end position="87"/>
    </location>
</feature>
<feature type="domain" description="WAP">
    <location>
        <begin position="21"/>
        <end position="66"/>
    </location>
</feature>
<feature type="disulfide bond" evidence="1">
    <location>
        <begin position="24"/>
        <end position="54"/>
    </location>
</feature>
<feature type="disulfide bond" evidence="1">
    <location>
        <begin position="32"/>
        <end position="58"/>
    </location>
</feature>
<feature type="disulfide bond" evidence="1">
    <location>
        <begin position="41"/>
        <end position="53"/>
    </location>
</feature>
<feature type="disulfide bond" evidence="3">
    <location>
        <begin position="42"/>
        <end position="80"/>
    </location>
</feature>
<feature type="disulfide bond" evidence="1">
    <location>
        <begin position="47"/>
        <end position="62"/>
    </location>
</feature>
<proteinExistence type="evidence at transcript level"/>
<keyword id="KW-0044">Antibiotic</keyword>
<keyword id="KW-0929">Antimicrobial</keyword>
<keyword id="KW-1015">Disulfide bond</keyword>
<keyword id="KW-0964">Secreted</keyword>
<keyword id="KW-0732">Signal</keyword>
<keyword id="KW-0800">Toxin</keyword>
<name>TXF15_LYCSI</name>
<organism>
    <name type="scientific">Lycosa singoriensis</name>
    <name type="common">Wolf spider</name>
    <name type="synonym">Aranea singoriensis</name>
    <dbReference type="NCBI Taxonomy" id="434756"/>
    <lineage>
        <taxon>Eukaryota</taxon>
        <taxon>Metazoa</taxon>
        <taxon>Ecdysozoa</taxon>
        <taxon>Arthropoda</taxon>
        <taxon>Chelicerata</taxon>
        <taxon>Arachnida</taxon>
        <taxon>Araneae</taxon>
        <taxon>Araneomorphae</taxon>
        <taxon>Entelegynae</taxon>
        <taxon>Lycosoidea</taxon>
        <taxon>Lycosidae</taxon>
        <taxon>Lycosa</taxon>
    </lineage>
</organism>
<comment type="function">
    <text evidence="1">Has antibacterial activity.</text>
</comment>
<comment type="subcellular location">
    <subcellularLocation>
        <location evidence="1">Secreted</location>
    </subcellularLocation>
</comment>
<comment type="tissue specificity">
    <text>Expressed by the venom gland.</text>
</comment>
<comment type="PTM">
    <text evidence="3">Contains 5 disulfide bonds.</text>
</comment>
<comment type="similarity">
    <text evidence="3">Belongs to the venom protein 11 family. 01 (wap-1) subfamily.</text>
</comment>